<dbReference type="SMR" id="P31888"/>
<dbReference type="GO" id="GO:0005615">
    <property type="term" value="C:extracellular space"/>
    <property type="evidence" value="ECO:0007669"/>
    <property type="project" value="TreeGrafter"/>
</dbReference>
<dbReference type="GO" id="GO:0031716">
    <property type="term" value="F:calcitonin receptor binding"/>
    <property type="evidence" value="ECO:0007669"/>
    <property type="project" value="TreeGrafter"/>
</dbReference>
<dbReference type="GO" id="GO:0005179">
    <property type="term" value="F:hormone activity"/>
    <property type="evidence" value="ECO:0007669"/>
    <property type="project" value="UniProtKB-KW"/>
</dbReference>
<dbReference type="GO" id="GO:0007189">
    <property type="term" value="P:adenylate cyclase-activating G protein-coupled receptor signaling pathway"/>
    <property type="evidence" value="ECO:0007669"/>
    <property type="project" value="TreeGrafter"/>
</dbReference>
<dbReference type="GO" id="GO:0051480">
    <property type="term" value="P:regulation of cytosolic calcium ion concentration"/>
    <property type="evidence" value="ECO:0007669"/>
    <property type="project" value="TreeGrafter"/>
</dbReference>
<dbReference type="Gene3D" id="6.10.250.2190">
    <property type="match status" value="1"/>
</dbReference>
<dbReference type="InterPro" id="IPR021117">
    <property type="entry name" value="Calcitonin-like"/>
</dbReference>
<dbReference type="InterPro" id="IPR021116">
    <property type="entry name" value="Calcitonin/adrenomedullin"/>
</dbReference>
<dbReference type="InterPro" id="IPR018360">
    <property type="entry name" value="Calcitonin_CS"/>
</dbReference>
<dbReference type="InterPro" id="IPR015476">
    <property type="entry name" value="Calcitonin_gene-rel_peptide"/>
</dbReference>
<dbReference type="InterPro" id="IPR001693">
    <property type="entry name" value="Calcitonin_peptide-like"/>
</dbReference>
<dbReference type="PANTHER" id="PTHR10505:SF3">
    <property type="entry name" value="CALCITONIN GENE-RELATED PEPTIDE 2"/>
    <property type="match status" value="1"/>
</dbReference>
<dbReference type="PANTHER" id="PTHR10505">
    <property type="entry name" value="CALCITONIN-RELATED"/>
    <property type="match status" value="1"/>
</dbReference>
<dbReference type="Pfam" id="PF00214">
    <property type="entry name" value="Calc_CGRP_IAPP"/>
    <property type="match status" value="1"/>
</dbReference>
<dbReference type="PRINTS" id="PR00817">
    <property type="entry name" value="CALCITONINB"/>
</dbReference>
<dbReference type="SMART" id="SM00113">
    <property type="entry name" value="CALCITONIN"/>
    <property type="match status" value="1"/>
</dbReference>
<dbReference type="PROSITE" id="PS00258">
    <property type="entry name" value="CALCITONIN"/>
    <property type="match status" value="1"/>
</dbReference>
<evidence type="ECO:0000250" key="1"/>
<evidence type="ECO:0000269" key="2">
    <source>
    </source>
</evidence>
<evidence type="ECO:0000305" key="3"/>
<name>CALCB_PELRI</name>
<reference key="1">
    <citation type="journal article" date="1993" name="Peptides">
        <title>Isolation and structural characterization of calcitonin gene-related peptide from the brain and intestine of the frog, Rana ridibunda.</title>
        <authorList>
            <person name="Conlon J.M."/>
            <person name="Tonon M.-C."/>
            <person name="Vaudry H."/>
        </authorList>
    </citation>
    <scope>PROTEIN SEQUENCE</scope>
    <scope>AMIDATION AT PHE-37</scope>
    <source>
        <tissue>Brain</tissue>
        <tissue>Intestine</tissue>
    </source>
</reference>
<protein>
    <recommendedName>
        <fullName>Calcitonin gene-related peptide</fullName>
        <shortName>CGRP</shortName>
    </recommendedName>
</protein>
<organism>
    <name type="scientific">Pelophylax ridibundus</name>
    <name type="common">Marsh frog</name>
    <name type="synonym">Rana ridibunda</name>
    <dbReference type="NCBI Taxonomy" id="8406"/>
    <lineage>
        <taxon>Eukaryota</taxon>
        <taxon>Metazoa</taxon>
        <taxon>Chordata</taxon>
        <taxon>Craniata</taxon>
        <taxon>Vertebrata</taxon>
        <taxon>Euteleostomi</taxon>
        <taxon>Amphibia</taxon>
        <taxon>Batrachia</taxon>
        <taxon>Anura</taxon>
        <taxon>Neobatrachia</taxon>
        <taxon>Ranoidea</taxon>
        <taxon>Ranidae</taxon>
        <taxon>Pelophylax</taxon>
    </lineage>
</organism>
<proteinExistence type="evidence at protein level"/>
<keyword id="KW-0027">Amidation</keyword>
<keyword id="KW-0903">Direct protein sequencing</keyword>
<keyword id="KW-1015">Disulfide bond</keyword>
<keyword id="KW-0372">Hormone</keyword>
<feature type="peptide" id="PRO_0000044674" description="Calcitonin gene-related peptide">
    <location>
        <begin position="1"/>
        <end position="37"/>
    </location>
</feature>
<feature type="modified residue" description="Phenylalanine amide" evidence="2">
    <location>
        <position position="37"/>
    </location>
</feature>
<feature type="disulfide bond" evidence="1">
    <location>
        <begin position="2"/>
        <end position="7"/>
    </location>
</feature>
<comment type="function">
    <text>CGRP induces vasodilation. It dilates a variety of vessels including the coronary, cerebral and systemic vasculature. Its abundance in the CNS also points toward a neurotransmitter or neuromodulator role.</text>
</comment>
<comment type="similarity">
    <text evidence="3">Belongs to the calcitonin family.</text>
</comment>
<sequence length="37" mass="3887">ACNTATCVTHRLADFLSRSGGMAKNNFVPTNVGSKAF</sequence>
<accession>P31888</accession>